<evidence type="ECO:0000255" key="1">
    <source>
        <dbReference type="HAMAP-Rule" id="MF_01159"/>
    </source>
</evidence>
<reference key="1">
    <citation type="submission" date="2009-06" db="EMBL/GenBank/DDBJ databases">
        <title>Complete sequence of chromosome of Geopacillus sp. WCH70.</title>
        <authorList>
            <consortium name="US DOE Joint Genome Institute"/>
            <person name="Lucas S."/>
            <person name="Copeland A."/>
            <person name="Lapidus A."/>
            <person name="Glavina del Rio T."/>
            <person name="Dalin E."/>
            <person name="Tice H."/>
            <person name="Bruce D."/>
            <person name="Goodwin L."/>
            <person name="Pitluck S."/>
            <person name="Chertkov O."/>
            <person name="Brettin T."/>
            <person name="Detter J.C."/>
            <person name="Han C."/>
            <person name="Larimer F."/>
            <person name="Land M."/>
            <person name="Hauser L."/>
            <person name="Kyrpides N."/>
            <person name="Mikhailova N."/>
            <person name="Brumm P."/>
            <person name="Mead D.A."/>
            <person name="Richardson P."/>
        </authorList>
    </citation>
    <scope>NUCLEOTIDE SEQUENCE [LARGE SCALE GENOMIC DNA]</scope>
    <source>
        <strain>WCH70</strain>
    </source>
</reference>
<proteinExistence type="inferred from homology"/>
<keyword id="KW-0963">Cytoplasm</keyword>
<keyword id="KW-0235">DNA replication</keyword>
<keyword id="KW-0236">DNA replication inhibitor</keyword>
<keyword id="KW-0479">Metal-binding</keyword>
<keyword id="KW-0862">Zinc</keyword>
<name>YABA_GEOSW</name>
<sequence length="121" mass="14474">MDKKEIFQSVTSMEEQLSHLYRQLVQLKEHVVQLLEENHHLQIENDHLRRRLEQVTSELAEEKQKEKDHKHGHERKLVDIGEGYDNLARLYQEGFHICHVHYGSVRKEGDCLFCLSFLNKK</sequence>
<accession>C5D355</accession>
<gene>
    <name evidence="1" type="primary">yabA</name>
    <name type="ordered locus">GWCH70_0029</name>
</gene>
<feature type="chain" id="PRO_1000213700" description="Replication initiation control protein YabA">
    <location>
        <begin position="1"/>
        <end position="121"/>
    </location>
</feature>
<feature type="binding site" evidence="1">
    <location>
        <position position="96"/>
    </location>
    <ligand>
        <name>Zn(2+)</name>
        <dbReference type="ChEBI" id="CHEBI:29105"/>
    </ligand>
</feature>
<feature type="binding site" evidence="1">
    <location>
        <position position="98"/>
    </location>
    <ligand>
        <name>Zn(2+)</name>
        <dbReference type="ChEBI" id="CHEBI:29105"/>
    </ligand>
</feature>
<feature type="binding site" evidence="1">
    <location>
        <position position="111"/>
    </location>
    <ligand>
        <name>Zn(2+)</name>
        <dbReference type="ChEBI" id="CHEBI:29105"/>
    </ligand>
</feature>
<feature type="binding site" evidence="1">
    <location>
        <position position="114"/>
    </location>
    <ligand>
        <name>Zn(2+)</name>
        <dbReference type="ChEBI" id="CHEBI:29105"/>
    </ligand>
</feature>
<dbReference type="EMBL" id="CP001638">
    <property type="protein sequence ID" value="ACS22971.1"/>
    <property type="molecule type" value="Genomic_DNA"/>
</dbReference>
<dbReference type="SMR" id="C5D355"/>
<dbReference type="STRING" id="471223.GWCH70_0029"/>
<dbReference type="KEGG" id="gwc:GWCH70_0029"/>
<dbReference type="eggNOG" id="COG4467">
    <property type="taxonomic scope" value="Bacteria"/>
</dbReference>
<dbReference type="HOGENOM" id="CLU_157169_0_0_9"/>
<dbReference type="OrthoDB" id="2112130at2"/>
<dbReference type="GO" id="GO:0009295">
    <property type="term" value="C:nucleoid"/>
    <property type="evidence" value="ECO:0007669"/>
    <property type="project" value="UniProtKB-SubCell"/>
</dbReference>
<dbReference type="GO" id="GO:0006260">
    <property type="term" value="P:DNA replication"/>
    <property type="evidence" value="ECO:0007669"/>
    <property type="project" value="UniProtKB-UniRule"/>
</dbReference>
<dbReference type="HAMAP" id="MF_01159">
    <property type="entry name" value="YabA"/>
    <property type="match status" value="1"/>
</dbReference>
<dbReference type="InterPro" id="IPR010377">
    <property type="entry name" value="YabA"/>
</dbReference>
<dbReference type="NCBIfam" id="NF009644">
    <property type="entry name" value="PRK13169.1-5"/>
    <property type="match status" value="1"/>
</dbReference>
<dbReference type="Pfam" id="PF06156">
    <property type="entry name" value="YabA"/>
    <property type="match status" value="1"/>
</dbReference>
<dbReference type="PIRSF" id="PIRSF021439">
    <property type="entry name" value="DUF972"/>
    <property type="match status" value="1"/>
</dbReference>
<organism>
    <name type="scientific">Geobacillus sp. (strain WCH70)</name>
    <dbReference type="NCBI Taxonomy" id="471223"/>
    <lineage>
        <taxon>Bacteria</taxon>
        <taxon>Bacillati</taxon>
        <taxon>Bacillota</taxon>
        <taxon>Bacilli</taxon>
        <taxon>Bacillales</taxon>
        <taxon>Anoxybacillaceae</taxon>
        <taxon>Geobacillus</taxon>
    </lineage>
</organism>
<protein>
    <recommendedName>
        <fullName evidence="1">Replication initiation control protein YabA</fullName>
    </recommendedName>
</protein>
<comment type="function">
    <text evidence="1">Involved in control of chromosome replication initiation. Inhibits the cooperative binding of DnaA to the oriC region, thus negatively regulating initiation of chromosome replication. Inhibits the ability of DnaA-ATP to form a helix on DNA; does not disassemble preformed DnaA-DNA helices. Decreases the residence time of DnaA on the chromosome at its binding sites (oriC, replication forks and promoter-binding sites). Tethers DnaA to the replication machinery via the DNA polymerase beta sliding clamp subunit (dnaN). Associates with oriC and other DnaA targets on the chromosome in a DnaA-dependent manner.</text>
</comment>
<comment type="cofactor">
    <cofactor evidence="1">
        <name>Zn(2+)</name>
        <dbReference type="ChEBI" id="CHEBI:29105"/>
    </cofactor>
    <text evidence="1">Binds 1 zinc ion per subunit.</text>
</comment>
<comment type="subunit">
    <text evidence="1">Homotetramer. Interacts with both DnaA and DnaN, acting as a bridge between these two proteins.</text>
</comment>
<comment type="subcellular location">
    <subcellularLocation>
        <location evidence="1">Cytoplasm</location>
        <location evidence="1">Nucleoid</location>
    </subcellularLocation>
    <text evidence="1">Localizes in tight foci, which correspond to the replisome at mid-cell throughout the cell cycle.</text>
</comment>
<comment type="similarity">
    <text evidence="1">Belongs to the YabA family.</text>
</comment>